<protein>
    <recommendedName>
        <fullName>26S proteasome non-ATPase regulatory subunit 13 homolog A</fullName>
    </recommendedName>
    <alternativeName>
        <fullName>26S proteasome regulatory subunit RPN9a</fullName>
        <shortName>AtRNP9a</shortName>
    </alternativeName>
    <alternativeName>
        <fullName>26S proteasome regulatory subunit S11 homolog A</fullName>
    </alternativeName>
</protein>
<proteinExistence type="evidence at protein level"/>
<organism>
    <name type="scientific">Arabidopsis thaliana</name>
    <name type="common">Mouse-ear cress</name>
    <dbReference type="NCBI Taxonomy" id="3702"/>
    <lineage>
        <taxon>Eukaryota</taxon>
        <taxon>Viridiplantae</taxon>
        <taxon>Streptophyta</taxon>
        <taxon>Embryophyta</taxon>
        <taxon>Tracheophyta</taxon>
        <taxon>Spermatophyta</taxon>
        <taxon>Magnoliopsida</taxon>
        <taxon>eudicotyledons</taxon>
        <taxon>Gunneridae</taxon>
        <taxon>Pentapetalae</taxon>
        <taxon>rosids</taxon>
        <taxon>malvids</taxon>
        <taxon>Brassicales</taxon>
        <taxon>Brassicaceae</taxon>
        <taxon>Camelineae</taxon>
        <taxon>Arabidopsis</taxon>
    </lineage>
</organism>
<reference key="1">
    <citation type="journal article" date="2004" name="J. Biol. Chem.">
        <title>Purification of the Arabidopsis 26 S proteasome: biochemical and molecular analyses revealed the presence of multiple isoforms.</title>
        <authorList>
            <person name="Yang P."/>
            <person name="Fu H."/>
            <person name="Walker J."/>
            <person name="Papa C.M."/>
            <person name="Smalle J."/>
            <person name="Ju Y.-M."/>
            <person name="Vierstra R.D."/>
        </authorList>
    </citation>
    <scope>NUCLEOTIDE SEQUENCE [MRNA]</scope>
    <scope>SUBUNIT</scope>
    <scope>IDENTIFICATION BY MASS SPECTROMETRY</scope>
    <scope>TISSUE SPECIFICITY</scope>
    <source>
        <strain>cv. Columbia</strain>
    </source>
</reference>
<reference key="2">
    <citation type="journal article" date="1998" name="DNA Res.">
        <title>Structural analysis of Arabidopsis thaliana chromosome 5. VI. Sequence features of the regions of 1,367,185 bp covered by 19 physically assigned P1 and TAC clones.</title>
        <authorList>
            <person name="Kotani H."/>
            <person name="Nakamura Y."/>
            <person name="Sato S."/>
            <person name="Asamizu E."/>
            <person name="Kaneko T."/>
            <person name="Miyajima N."/>
            <person name="Tabata S."/>
        </authorList>
    </citation>
    <scope>NUCLEOTIDE SEQUENCE [LARGE SCALE GENOMIC DNA]</scope>
    <source>
        <strain>cv. Columbia</strain>
    </source>
</reference>
<reference key="3">
    <citation type="journal article" date="2017" name="Plant J.">
        <title>Araport11: a complete reannotation of the Arabidopsis thaliana reference genome.</title>
        <authorList>
            <person name="Cheng C.Y."/>
            <person name="Krishnakumar V."/>
            <person name="Chan A.P."/>
            <person name="Thibaud-Nissen F."/>
            <person name="Schobel S."/>
            <person name="Town C.D."/>
        </authorList>
    </citation>
    <scope>GENOME REANNOTATION</scope>
    <source>
        <strain>cv. Columbia</strain>
    </source>
</reference>
<reference key="4">
    <citation type="journal article" date="2003" name="Science">
        <title>Empirical analysis of transcriptional activity in the Arabidopsis genome.</title>
        <authorList>
            <person name="Yamada K."/>
            <person name="Lim J."/>
            <person name="Dale J.M."/>
            <person name="Chen H."/>
            <person name="Shinn P."/>
            <person name="Palm C.J."/>
            <person name="Southwick A.M."/>
            <person name="Wu H.C."/>
            <person name="Kim C.J."/>
            <person name="Nguyen M."/>
            <person name="Pham P.K."/>
            <person name="Cheuk R.F."/>
            <person name="Karlin-Newmann G."/>
            <person name="Liu S.X."/>
            <person name="Lam B."/>
            <person name="Sakano H."/>
            <person name="Wu T."/>
            <person name="Yu G."/>
            <person name="Miranda M."/>
            <person name="Quach H.L."/>
            <person name="Tripp M."/>
            <person name="Chang C.H."/>
            <person name="Lee J.M."/>
            <person name="Toriumi M.J."/>
            <person name="Chan M.M."/>
            <person name="Tang C.C."/>
            <person name="Onodera C.S."/>
            <person name="Deng J.M."/>
            <person name="Akiyama K."/>
            <person name="Ansari Y."/>
            <person name="Arakawa T."/>
            <person name="Banh J."/>
            <person name="Banno F."/>
            <person name="Bowser L."/>
            <person name="Brooks S.Y."/>
            <person name="Carninci P."/>
            <person name="Chao Q."/>
            <person name="Choy N."/>
            <person name="Enju A."/>
            <person name="Goldsmith A.D."/>
            <person name="Gurjal M."/>
            <person name="Hansen N.F."/>
            <person name="Hayashizaki Y."/>
            <person name="Johnson-Hopson C."/>
            <person name="Hsuan V.W."/>
            <person name="Iida K."/>
            <person name="Karnes M."/>
            <person name="Khan S."/>
            <person name="Koesema E."/>
            <person name="Ishida J."/>
            <person name="Jiang P.X."/>
            <person name="Jones T."/>
            <person name="Kawai J."/>
            <person name="Kamiya A."/>
            <person name="Meyers C."/>
            <person name="Nakajima M."/>
            <person name="Narusaka M."/>
            <person name="Seki M."/>
            <person name="Sakurai T."/>
            <person name="Satou M."/>
            <person name="Tamse R."/>
            <person name="Vaysberg M."/>
            <person name="Wallender E.K."/>
            <person name="Wong C."/>
            <person name="Yamamura Y."/>
            <person name="Yuan S."/>
            <person name="Shinozaki K."/>
            <person name="Davis R.W."/>
            <person name="Theologis A."/>
            <person name="Ecker J.R."/>
        </authorList>
    </citation>
    <scope>NUCLEOTIDE SEQUENCE [LARGE SCALE MRNA]</scope>
    <source>
        <strain>cv. Columbia</strain>
    </source>
</reference>
<reference key="5">
    <citation type="journal article" date="2010" name="J. Biol. Chem.">
        <title>Affinity purification of the Arabidopsis 26 S proteasome reveals a diverse array of plant proteolytic complexes.</title>
        <authorList>
            <person name="Book A.J."/>
            <person name="Gladman N.P."/>
            <person name="Lee S.S."/>
            <person name="Scalf M."/>
            <person name="Smith L.M."/>
            <person name="Vierstra R.D."/>
        </authorList>
    </citation>
    <scope>IDENTIFICATION BY MASS SPECTROMETRY</scope>
    <scope>CHARACTERIZATION OF THE 26S PROTEASOME COMPLEX</scope>
    <scope>SUBUNIT</scope>
    <scope>CLEAVAGE OF INITIATOR METHIONINE</scope>
</reference>
<reference key="6">
    <citation type="journal article" date="2012" name="Mol. Cell. Proteomics">
        <title>Comparative large-scale characterisation of plant vs. mammal proteins reveals similar and idiosyncratic N-alpha acetylation features.</title>
        <authorList>
            <person name="Bienvenut W.V."/>
            <person name="Sumpton D."/>
            <person name="Martinez A."/>
            <person name="Lilla S."/>
            <person name="Espagne C."/>
            <person name="Meinnel T."/>
            <person name="Giglione C."/>
        </authorList>
    </citation>
    <scope>ACETYLATION [LARGE SCALE ANALYSIS] AT ALA-2</scope>
    <scope>CLEAVAGE OF INITIATOR METHIONINE [LARGE SCALE ANALYSIS]</scope>
    <scope>IDENTIFICATION BY MASS SPECTROMETRY [LARGE SCALE ANALYSIS]</scope>
</reference>
<keyword id="KW-0007">Acetylation</keyword>
<keyword id="KW-0025">Alternative splicing</keyword>
<keyword id="KW-0647">Proteasome</keyword>
<keyword id="KW-1185">Reference proteome</keyword>
<feature type="initiator methionine" description="Removed" evidence="6 7">
    <location>
        <position position="1"/>
    </location>
</feature>
<feature type="chain" id="PRO_0000423173" description="26S proteasome non-ATPase regulatory subunit 13 homolog A">
    <location>
        <begin position="2"/>
        <end position="386"/>
    </location>
</feature>
<feature type="domain" description="PCI" evidence="2">
    <location>
        <begin position="173"/>
        <end position="347"/>
    </location>
</feature>
<feature type="modified residue" description="N-acetylalanine" evidence="7">
    <location>
        <position position="2"/>
    </location>
</feature>
<dbReference type="EMBL" id="AY230841">
    <property type="protein sequence ID" value="AAP86668.1"/>
    <property type="molecule type" value="mRNA"/>
</dbReference>
<dbReference type="EMBL" id="AB012245">
    <property type="protein sequence ID" value="BAB09205.1"/>
    <property type="status" value="ALT_SEQ"/>
    <property type="molecule type" value="Genomic_DNA"/>
</dbReference>
<dbReference type="EMBL" id="CP002688">
    <property type="protein sequence ID" value="AED95277.1"/>
    <property type="molecule type" value="Genomic_DNA"/>
</dbReference>
<dbReference type="EMBL" id="AY093136">
    <property type="protein sequence ID" value="AAM13135.1"/>
    <property type="molecule type" value="mRNA"/>
</dbReference>
<dbReference type="EMBL" id="BT003384">
    <property type="protein sequence ID" value="AAO30047.1"/>
    <property type="molecule type" value="mRNA"/>
</dbReference>
<dbReference type="RefSeq" id="NP_199375.2">
    <molecule id="Q8RWF0-1"/>
    <property type="nucleotide sequence ID" value="NM_123930.5"/>
</dbReference>
<dbReference type="SMR" id="Q8RWF0"/>
<dbReference type="BioGRID" id="19851">
    <property type="interactions" value="106"/>
</dbReference>
<dbReference type="FunCoup" id="Q8RWF0">
    <property type="interactions" value="5275"/>
</dbReference>
<dbReference type="IntAct" id="Q8RWF0">
    <property type="interactions" value="5"/>
</dbReference>
<dbReference type="STRING" id="3702.Q8RWF0"/>
<dbReference type="iPTMnet" id="Q8RWF0"/>
<dbReference type="PaxDb" id="3702-AT5G45620.1"/>
<dbReference type="ProteomicsDB" id="226341">
    <molecule id="Q8RWF0-1"/>
</dbReference>
<dbReference type="EnsemblPlants" id="AT5G45620.1">
    <molecule id="Q8RWF0-1"/>
    <property type="protein sequence ID" value="AT5G45620.1"/>
    <property type="gene ID" value="AT5G45620"/>
</dbReference>
<dbReference type="GeneID" id="834602"/>
<dbReference type="Gramene" id="AT5G45620.1">
    <molecule id="Q8RWF0-1"/>
    <property type="protein sequence ID" value="AT5G45620.1"/>
    <property type="gene ID" value="AT5G45620"/>
</dbReference>
<dbReference type="KEGG" id="ath:AT5G45620"/>
<dbReference type="Araport" id="AT5G45620"/>
<dbReference type="TAIR" id="AT5G45620"/>
<dbReference type="eggNOG" id="KOG2908">
    <property type="taxonomic scope" value="Eukaryota"/>
</dbReference>
<dbReference type="HOGENOM" id="CLU_042989_0_0_1"/>
<dbReference type="InParanoid" id="Q8RWF0"/>
<dbReference type="OMA" id="SFEDYWE"/>
<dbReference type="PhylomeDB" id="Q8RWF0"/>
<dbReference type="PRO" id="PR:Q8RWF0"/>
<dbReference type="Proteomes" id="UP000006548">
    <property type="component" value="Chromosome 5"/>
</dbReference>
<dbReference type="ExpressionAtlas" id="Q8RWF0">
    <property type="expression patterns" value="baseline and differential"/>
</dbReference>
<dbReference type="GO" id="GO:0000502">
    <property type="term" value="C:proteasome complex"/>
    <property type="evidence" value="ECO:0000314"/>
    <property type="project" value="TAIR"/>
</dbReference>
<dbReference type="FunFam" id="1.25.40.570:FF:000024">
    <property type="entry name" value="26S proteasome non-ATPase regulatory subunit 13 homolog B"/>
    <property type="match status" value="1"/>
</dbReference>
<dbReference type="Gene3D" id="1.25.40.570">
    <property type="match status" value="1"/>
</dbReference>
<dbReference type="InterPro" id="IPR000717">
    <property type="entry name" value="PCI_dom"/>
</dbReference>
<dbReference type="InterPro" id="IPR054179">
    <property type="entry name" value="PSD13_N"/>
</dbReference>
<dbReference type="InterPro" id="IPR035298">
    <property type="entry name" value="PSMD13"/>
</dbReference>
<dbReference type="InterPro" id="IPR036390">
    <property type="entry name" value="WH_DNA-bd_sf"/>
</dbReference>
<dbReference type="PANTHER" id="PTHR10539">
    <property type="entry name" value="26S PROTEASOME NON-ATPASE REGULATORY SUBUNIT 13"/>
    <property type="match status" value="1"/>
</dbReference>
<dbReference type="PANTHER" id="PTHR10539:SF0">
    <property type="entry name" value="26S PROTEASOME NON-ATPASE REGULATORY SUBUNIT 13"/>
    <property type="match status" value="1"/>
</dbReference>
<dbReference type="Pfam" id="PF01399">
    <property type="entry name" value="PCI"/>
    <property type="match status" value="1"/>
</dbReference>
<dbReference type="Pfam" id="PF22037">
    <property type="entry name" value="PSD13_N"/>
    <property type="match status" value="1"/>
</dbReference>
<dbReference type="SMART" id="SM00088">
    <property type="entry name" value="PINT"/>
    <property type="match status" value="1"/>
</dbReference>
<dbReference type="SUPFAM" id="SSF46785">
    <property type="entry name" value="Winged helix' DNA-binding domain"/>
    <property type="match status" value="1"/>
</dbReference>
<dbReference type="PROSITE" id="PS50250">
    <property type="entry name" value="PCI"/>
    <property type="match status" value="1"/>
</dbReference>
<gene>
    <name type="primary">RPN9A</name>
    <name type="ordered locus">At5g45620</name>
    <name type="ORF">MRA19.2</name>
</gene>
<sequence length="386" mass="44168">MAALQYLESLKNTHPELGEWYNSLADLYQKKLWHQLTLKLEQFIALAVFQAGDALIQFYHNFITDFETKINLLKLAHFAVVVSRQYSEKEAAVSYLESVIEKLRATKEPRITEPIIYIETQKALFKLEQGDQKECKKILDDGKSSLDSMTDIDPSVYANFYWVSSQYHKCRQEFSDFYKSALLYLAYTSVEDLSESFKLDLAFDLSLSALLGENIYNFGELLAHPILKSLLGTNVEWLYHILQAFNHGDLVQYQELCRVHNASLIAQPALVENEKKLLEKINILCLIEIIFSRPAEDRTIPLSIIAERTKLSIEDVEHLLMKSLSVHLIEGIIDQVNGTIYVSWAQPRVLGIPQIKALRDQLDSWVDKVHTTLLSVEAETPDLVAA</sequence>
<accession>Q8RWF0</accession>
<accession>Q9FK79</accession>
<name>PS13A_ARATH</name>
<comment type="function">
    <text evidence="1">Acts as a regulatory subunit of the 26S proteasome which is involved in the ATP-dependent degradation of ubiquitinated proteins.</text>
</comment>
<comment type="subunit">
    <text evidence="3 4">Component of the 19S regulatory particle (RP/PA700) lid subcomplex of the 26S proteasome. The 26S proteasome is composed of a core protease (CP), known as the 20S proteasome, capped at one or both ends by the 19S regulatory particle (RP/PA700). The RP/PA700 complex is composed of at least 17 different subunits in two subcomplexes, the base and the lid, which form the portions proximal and distal to the 20S proteolytic core, respectively.</text>
</comment>
<comment type="alternative products">
    <event type="alternative splicing"/>
    <isoform>
        <id>Q8RWF0-1</id>
        <name>1</name>
        <sequence type="displayed"/>
    </isoform>
    <text>A number of isoforms are produced. According to EST sequences.</text>
</comment>
<comment type="tissue specificity">
    <text evidence="3">Ubiquitous with highest expression in flowers.</text>
</comment>
<comment type="similarity">
    <text evidence="5">Belongs to the proteasome subunit S11 family.</text>
</comment>
<comment type="sequence caution" evidence="5">
    <conflict type="erroneous gene model prediction">
        <sequence resource="EMBL-CDS" id="BAB09205"/>
    </conflict>
</comment>
<evidence type="ECO:0000250" key="1"/>
<evidence type="ECO:0000255" key="2">
    <source>
        <dbReference type="PROSITE-ProRule" id="PRU01185"/>
    </source>
</evidence>
<evidence type="ECO:0000269" key="3">
    <source>
    </source>
</evidence>
<evidence type="ECO:0000269" key="4">
    <source>
    </source>
</evidence>
<evidence type="ECO:0000305" key="5"/>
<evidence type="ECO:0000305" key="6">
    <source>
    </source>
</evidence>
<evidence type="ECO:0007744" key="7">
    <source>
    </source>
</evidence>